<comment type="function">
    <text evidence="1">Specifically methylates the N7 position of guanine in position 527 of 16S rRNA.</text>
</comment>
<comment type="catalytic activity">
    <reaction evidence="1">
        <text>guanosine(527) in 16S rRNA + S-adenosyl-L-methionine = N(7)-methylguanosine(527) in 16S rRNA + S-adenosyl-L-homocysteine</text>
        <dbReference type="Rhea" id="RHEA:42732"/>
        <dbReference type="Rhea" id="RHEA-COMP:10209"/>
        <dbReference type="Rhea" id="RHEA-COMP:10210"/>
        <dbReference type="ChEBI" id="CHEBI:57856"/>
        <dbReference type="ChEBI" id="CHEBI:59789"/>
        <dbReference type="ChEBI" id="CHEBI:74269"/>
        <dbReference type="ChEBI" id="CHEBI:74480"/>
        <dbReference type="EC" id="2.1.1.170"/>
    </reaction>
</comment>
<comment type="subcellular location">
    <subcellularLocation>
        <location evidence="1">Cytoplasm</location>
    </subcellularLocation>
</comment>
<comment type="similarity">
    <text evidence="1">Belongs to the methyltransferase superfamily. RNA methyltransferase RsmG family.</text>
</comment>
<reference key="1">
    <citation type="submission" date="2006-12" db="EMBL/GenBank/DDBJ databases">
        <title>Complete sequence of Halorhodospira halophila SL1.</title>
        <authorList>
            <consortium name="US DOE Joint Genome Institute"/>
            <person name="Copeland A."/>
            <person name="Lucas S."/>
            <person name="Lapidus A."/>
            <person name="Barry K."/>
            <person name="Detter J.C."/>
            <person name="Glavina del Rio T."/>
            <person name="Hammon N."/>
            <person name="Israni S."/>
            <person name="Dalin E."/>
            <person name="Tice H."/>
            <person name="Pitluck S."/>
            <person name="Saunders E."/>
            <person name="Brettin T."/>
            <person name="Bruce D."/>
            <person name="Han C."/>
            <person name="Tapia R."/>
            <person name="Schmutz J."/>
            <person name="Larimer F."/>
            <person name="Land M."/>
            <person name="Hauser L."/>
            <person name="Kyrpides N."/>
            <person name="Mikhailova N."/>
            <person name="Hoff W."/>
            <person name="Richardson P."/>
        </authorList>
    </citation>
    <scope>NUCLEOTIDE SEQUENCE [LARGE SCALE GENOMIC DNA]</scope>
    <source>
        <strain>DSM 244 / SL1</strain>
    </source>
</reference>
<accession>A1WSY4</accession>
<gene>
    <name evidence="1" type="primary">rsmG</name>
    <name type="ordered locus">Hhal_0001</name>
</gene>
<name>RSMG_HALHL</name>
<keyword id="KW-0963">Cytoplasm</keyword>
<keyword id="KW-0489">Methyltransferase</keyword>
<keyword id="KW-1185">Reference proteome</keyword>
<keyword id="KW-0698">rRNA processing</keyword>
<keyword id="KW-0949">S-adenosyl-L-methionine</keyword>
<keyword id="KW-0808">Transferase</keyword>
<evidence type="ECO:0000255" key="1">
    <source>
        <dbReference type="HAMAP-Rule" id="MF_00074"/>
    </source>
</evidence>
<sequence>MPRKYLESRLEDLQIELDAPALERLEGFLSLLMRWNRAYNLTAARDVETLIDRHLLDSLVVRRYLPAGALADVGSGAGFPGLVLALIEPDRSVTLIDSNGKKTRFLRQCATELGLHRVQVRQARMEALDDGDFAVVTARAVAPLATLIPGTRGLLAPDGALLALKGERIQEELAELPEALVEALDVHELPAIAGQGRACLVACRAAVHL</sequence>
<dbReference type="EC" id="2.1.1.170" evidence="1"/>
<dbReference type="EMBL" id="CP000544">
    <property type="protein sequence ID" value="ABM60796.1"/>
    <property type="molecule type" value="Genomic_DNA"/>
</dbReference>
<dbReference type="RefSeq" id="WP_011812819.1">
    <property type="nucleotide sequence ID" value="NC_008789.1"/>
</dbReference>
<dbReference type="SMR" id="A1WSY4"/>
<dbReference type="STRING" id="349124.Hhal_0001"/>
<dbReference type="KEGG" id="hha:Hhal_0001"/>
<dbReference type="eggNOG" id="COG0357">
    <property type="taxonomic scope" value="Bacteria"/>
</dbReference>
<dbReference type="HOGENOM" id="CLU_065341_2_0_6"/>
<dbReference type="OrthoDB" id="9808773at2"/>
<dbReference type="Proteomes" id="UP000000647">
    <property type="component" value="Chromosome"/>
</dbReference>
<dbReference type="GO" id="GO:0005829">
    <property type="term" value="C:cytosol"/>
    <property type="evidence" value="ECO:0007669"/>
    <property type="project" value="TreeGrafter"/>
</dbReference>
<dbReference type="GO" id="GO:0070043">
    <property type="term" value="F:rRNA (guanine-N7-)-methyltransferase activity"/>
    <property type="evidence" value="ECO:0007669"/>
    <property type="project" value="UniProtKB-UniRule"/>
</dbReference>
<dbReference type="Gene3D" id="3.40.50.150">
    <property type="entry name" value="Vaccinia Virus protein VP39"/>
    <property type="match status" value="1"/>
</dbReference>
<dbReference type="HAMAP" id="MF_00074">
    <property type="entry name" value="16SrRNA_methyltr_G"/>
    <property type="match status" value="1"/>
</dbReference>
<dbReference type="InterPro" id="IPR003682">
    <property type="entry name" value="rRNA_ssu_MeTfrase_G"/>
</dbReference>
<dbReference type="InterPro" id="IPR029063">
    <property type="entry name" value="SAM-dependent_MTases_sf"/>
</dbReference>
<dbReference type="NCBIfam" id="TIGR00138">
    <property type="entry name" value="rsmG_gidB"/>
    <property type="match status" value="1"/>
</dbReference>
<dbReference type="PANTHER" id="PTHR31760">
    <property type="entry name" value="S-ADENOSYL-L-METHIONINE-DEPENDENT METHYLTRANSFERASES SUPERFAMILY PROTEIN"/>
    <property type="match status" value="1"/>
</dbReference>
<dbReference type="PANTHER" id="PTHR31760:SF0">
    <property type="entry name" value="S-ADENOSYL-L-METHIONINE-DEPENDENT METHYLTRANSFERASES SUPERFAMILY PROTEIN"/>
    <property type="match status" value="1"/>
</dbReference>
<dbReference type="Pfam" id="PF02527">
    <property type="entry name" value="GidB"/>
    <property type="match status" value="1"/>
</dbReference>
<dbReference type="PIRSF" id="PIRSF003078">
    <property type="entry name" value="GidB"/>
    <property type="match status" value="1"/>
</dbReference>
<dbReference type="SUPFAM" id="SSF53335">
    <property type="entry name" value="S-adenosyl-L-methionine-dependent methyltransferases"/>
    <property type="match status" value="1"/>
</dbReference>
<protein>
    <recommendedName>
        <fullName evidence="1">Ribosomal RNA small subunit methyltransferase G</fullName>
        <ecNumber evidence="1">2.1.1.170</ecNumber>
    </recommendedName>
    <alternativeName>
        <fullName evidence="1">16S rRNA 7-methylguanosine methyltransferase</fullName>
        <shortName evidence="1">16S rRNA m7G methyltransferase</shortName>
    </alternativeName>
</protein>
<feature type="chain" id="PRO_0000335361" description="Ribosomal RNA small subunit methyltransferase G">
    <location>
        <begin position="1"/>
        <end position="209"/>
    </location>
</feature>
<feature type="binding site" evidence="1">
    <location>
        <position position="74"/>
    </location>
    <ligand>
        <name>S-adenosyl-L-methionine</name>
        <dbReference type="ChEBI" id="CHEBI:59789"/>
    </ligand>
</feature>
<feature type="binding site" evidence="1">
    <location>
        <position position="79"/>
    </location>
    <ligand>
        <name>S-adenosyl-L-methionine</name>
        <dbReference type="ChEBI" id="CHEBI:59789"/>
    </ligand>
</feature>
<feature type="binding site" evidence="1">
    <location>
        <position position="139"/>
    </location>
    <ligand>
        <name>S-adenosyl-L-methionine</name>
        <dbReference type="ChEBI" id="CHEBI:59789"/>
    </ligand>
</feature>
<proteinExistence type="inferred from homology"/>
<organism>
    <name type="scientific">Halorhodospira halophila (strain DSM 244 / SL1)</name>
    <name type="common">Ectothiorhodospira halophila (strain DSM 244 / SL1)</name>
    <dbReference type="NCBI Taxonomy" id="349124"/>
    <lineage>
        <taxon>Bacteria</taxon>
        <taxon>Pseudomonadati</taxon>
        <taxon>Pseudomonadota</taxon>
        <taxon>Gammaproteobacteria</taxon>
        <taxon>Chromatiales</taxon>
        <taxon>Ectothiorhodospiraceae</taxon>
        <taxon>Halorhodospira</taxon>
    </lineage>
</organism>